<keyword id="KW-0963">Cytoplasm</keyword>
<keyword id="KW-0378">Hydrolase</keyword>
<keyword id="KW-0479">Metal-binding</keyword>
<keyword id="KW-0547">Nucleotide-binding</keyword>
<keyword id="KW-1185">Reference proteome</keyword>
<comment type="function">
    <text evidence="1">Nucleotidase that shows phosphatase activity on nucleoside 5'-monophosphates.</text>
</comment>
<comment type="catalytic activity">
    <reaction evidence="1">
        <text>a ribonucleoside 5'-phosphate + H2O = a ribonucleoside + phosphate</text>
        <dbReference type="Rhea" id="RHEA:12484"/>
        <dbReference type="ChEBI" id="CHEBI:15377"/>
        <dbReference type="ChEBI" id="CHEBI:18254"/>
        <dbReference type="ChEBI" id="CHEBI:43474"/>
        <dbReference type="ChEBI" id="CHEBI:58043"/>
        <dbReference type="EC" id="3.1.3.5"/>
    </reaction>
</comment>
<comment type="cofactor">
    <cofactor evidence="1">
        <name>a divalent metal cation</name>
        <dbReference type="ChEBI" id="CHEBI:60240"/>
    </cofactor>
    <text evidence="1">Binds 1 divalent metal cation per subunit.</text>
</comment>
<comment type="subcellular location">
    <subcellularLocation>
        <location evidence="1">Cytoplasm</location>
    </subcellularLocation>
</comment>
<comment type="similarity">
    <text evidence="1">Belongs to the SurE nucleotidase family.</text>
</comment>
<organism>
    <name type="scientific">Haloarcula marismortui (strain ATCC 43049 / DSM 3752 / JCM 8966 / VKM B-1809)</name>
    <name type="common">Halobacterium marismortui</name>
    <dbReference type="NCBI Taxonomy" id="272569"/>
    <lineage>
        <taxon>Archaea</taxon>
        <taxon>Methanobacteriati</taxon>
        <taxon>Methanobacteriota</taxon>
        <taxon>Stenosarchaea group</taxon>
        <taxon>Halobacteria</taxon>
        <taxon>Halobacteriales</taxon>
        <taxon>Haloarculaceae</taxon>
        <taxon>Haloarcula</taxon>
    </lineage>
</organism>
<gene>
    <name evidence="1" type="primary">surE</name>
    <name type="ordered locus">rrnAC0514</name>
</gene>
<name>SURE_HALMA</name>
<protein>
    <recommendedName>
        <fullName evidence="1">5'-nucleotidase SurE</fullName>
        <ecNumber evidence="1">3.1.3.5</ecNumber>
    </recommendedName>
    <alternativeName>
        <fullName evidence="1">Nucleoside 5'-monophosphate phosphohydrolase</fullName>
    </alternativeName>
</protein>
<dbReference type="EC" id="3.1.3.5" evidence="1"/>
<dbReference type="EMBL" id="AY596297">
    <property type="protein sequence ID" value="AAV45535.1"/>
    <property type="molecule type" value="Genomic_DNA"/>
</dbReference>
<dbReference type="RefSeq" id="WP_004962440.1">
    <property type="nucleotide sequence ID" value="NZ_CP039138.1"/>
</dbReference>
<dbReference type="SMR" id="Q5V4L7"/>
<dbReference type="STRING" id="272569.rrnAC0514"/>
<dbReference type="PaxDb" id="272569-rrnAC0514"/>
<dbReference type="EnsemblBacteria" id="AAV45535">
    <property type="protein sequence ID" value="AAV45535"/>
    <property type="gene ID" value="rrnAC0514"/>
</dbReference>
<dbReference type="GeneID" id="64822858"/>
<dbReference type="KEGG" id="hma:rrnAC0514"/>
<dbReference type="PATRIC" id="fig|272569.17.peg.1281"/>
<dbReference type="eggNOG" id="arCOG02303">
    <property type="taxonomic scope" value="Archaea"/>
</dbReference>
<dbReference type="HOGENOM" id="CLU_045192_1_3_2"/>
<dbReference type="Proteomes" id="UP000001169">
    <property type="component" value="Chromosome I"/>
</dbReference>
<dbReference type="GO" id="GO:0005737">
    <property type="term" value="C:cytoplasm"/>
    <property type="evidence" value="ECO:0007669"/>
    <property type="project" value="UniProtKB-SubCell"/>
</dbReference>
<dbReference type="GO" id="GO:0008253">
    <property type="term" value="F:5'-nucleotidase activity"/>
    <property type="evidence" value="ECO:0007669"/>
    <property type="project" value="UniProtKB-UniRule"/>
</dbReference>
<dbReference type="GO" id="GO:0046872">
    <property type="term" value="F:metal ion binding"/>
    <property type="evidence" value="ECO:0007669"/>
    <property type="project" value="UniProtKB-UniRule"/>
</dbReference>
<dbReference type="GO" id="GO:0000166">
    <property type="term" value="F:nucleotide binding"/>
    <property type="evidence" value="ECO:0007669"/>
    <property type="project" value="UniProtKB-KW"/>
</dbReference>
<dbReference type="Gene3D" id="3.40.1210.10">
    <property type="entry name" value="Survival protein SurE-like phosphatase/nucleotidase"/>
    <property type="match status" value="1"/>
</dbReference>
<dbReference type="HAMAP" id="MF_00060">
    <property type="entry name" value="SurE"/>
    <property type="match status" value="1"/>
</dbReference>
<dbReference type="InterPro" id="IPR030048">
    <property type="entry name" value="SurE"/>
</dbReference>
<dbReference type="InterPro" id="IPR002828">
    <property type="entry name" value="SurE-like_Pase/nucleotidase"/>
</dbReference>
<dbReference type="InterPro" id="IPR036523">
    <property type="entry name" value="SurE-like_sf"/>
</dbReference>
<dbReference type="NCBIfam" id="TIGR00087">
    <property type="entry name" value="surE"/>
    <property type="match status" value="1"/>
</dbReference>
<dbReference type="PANTHER" id="PTHR30457">
    <property type="entry name" value="5'-NUCLEOTIDASE SURE"/>
    <property type="match status" value="1"/>
</dbReference>
<dbReference type="PANTHER" id="PTHR30457:SF0">
    <property type="entry name" value="PHOSPHATASE, PUTATIVE (AFU_ORTHOLOGUE AFUA_4G01070)-RELATED"/>
    <property type="match status" value="1"/>
</dbReference>
<dbReference type="Pfam" id="PF01975">
    <property type="entry name" value="SurE"/>
    <property type="match status" value="1"/>
</dbReference>
<dbReference type="SUPFAM" id="SSF64167">
    <property type="entry name" value="SurE-like"/>
    <property type="match status" value="1"/>
</dbReference>
<sequence length="269" mass="28360">MDEPTILLTNDDGIESAGLRAVYDGLSTVGDVTAVAPAEDQSAVGRAISHEVTVHEHELGYAVEGTPSDCVVAGLEALVTDTDLVVAGCNRGANLGAYVLGRSGTVSAAVEATFFDVPAMAVSMYIPVREDAAFADIEANGDSYREAAKATTYLADHAVDAGVFEQCDYLNINAPVAEWGDAQMTVTRPSHLYEMDAEQDGDAVTLHDRIWEHMADGDIPDPEGTDRRAVVDGKVSVSPLTAPHTTEHHEALDAIAETYEPDDGGEAAD</sequence>
<proteinExistence type="inferred from homology"/>
<accession>Q5V4L7</accession>
<reference key="1">
    <citation type="journal article" date="2004" name="Genome Res.">
        <title>Genome sequence of Haloarcula marismortui: a halophilic archaeon from the Dead Sea.</title>
        <authorList>
            <person name="Baliga N.S."/>
            <person name="Bonneau R."/>
            <person name="Facciotti M.T."/>
            <person name="Pan M."/>
            <person name="Glusman G."/>
            <person name="Deutsch E.W."/>
            <person name="Shannon P."/>
            <person name="Chiu Y."/>
            <person name="Weng R.S."/>
            <person name="Gan R.R."/>
            <person name="Hung P."/>
            <person name="Date S.V."/>
            <person name="Marcotte E."/>
            <person name="Hood L."/>
            <person name="Ng W.V."/>
        </authorList>
    </citation>
    <scope>NUCLEOTIDE SEQUENCE [LARGE SCALE GENOMIC DNA]</scope>
    <source>
        <strain>ATCC 43049 / DSM 3752 / JCM 8966 / VKM B-1809</strain>
    </source>
</reference>
<evidence type="ECO:0000255" key="1">
    <source>
        <dbReference type="HAMAP-Rule" id="MF_00060"/>
    </source>
</evidence>
<feature type="chain" id="PRO_0000235675" description="5'-nucleotidase SurE">
    <location>
        <begin position="1"/>
        <end position="269"/>
    </location>
</feature>
<feature type="binding site" evidence="1">
    <location>
        <position position="11"/>
    </location>
    <ligand>
        <name>a divalent metal cation</name>
        <dbReference type="ChEBI" id="CHEBI:60240"/>
    </ligand>
</feature>
<feature type="binding site" evidence="1">
    <location>
        <position position="12"/>
    </location>
    <ligand>
        <name>a divalent metal cation</name>
        <dbReference type="ChEBI" id="CHEBI:60240"/>
    </ligand>
</feature>
<feature type="binding site" evidence="1">
    <location>
        <position position="42"/>
    </location>
    <ligand>
        <name>a divalent metal cation</name>
        <dbReference type="ChEBI" id="CHEBI:60240"/>
    </ligand>
</feature>
<feature type="binding site" evidence="1">
    <location>
        <position position="90"/>
    </location>
    <ligand>
        <name>a divalent metal cation</name>
        <dbReference type="ChEBI" id="CHEBI:60240"/>
    </ligand>
</feature>